<sequence length="300" mass="32427">MQRKIPRRIVDGVLLLDKPSGMTSNGALQTARRLLNAAKAGHTGTLDPMASGLLPLTFGEATKFSQILLDADKTYEAGVKLGTTTDTGDADGNVVAEHPVSVTREALEEVLSRFRGEIDQLPPMYSALKRDGKPLYEYARAGIEIEREVRRVTIHDLELIAFSGEHFSMRVRCSKGTYIRTLAMDIGAALGCGAYLDALRRTAIGDFDAARAVTLEALEASPAAMRDGLLEPVDALVAHFPKVELQPAEAAAILQGRELRKPEDGQGSVRLFCGGRFLGVGEWQSGSLRPKRLIATQTGQ</sequence>
<keyword id="KW-0413">Isomerase</keyword>
<keyword id="KW-1185">Reference proteome</keyword>
<keyword id="KW-0819">tRNA processing</keyword>
<dbReference type="EC" id="5.4.99.25" evidence="1"/>
<dbReference type="EMBL" id="AM406670">
    <property type="protein sequence ID" value="CAL94722.1"/>
    <property type="molecule type" value="Genomic_DNA"/>
</dbReference>
<dbReference type="RefSeq" id="WP_011765836.1">
    <property type="nucleotide sequence ID" value="NC_008702.1"/>
</dbReference>
<dbReference type="SMR" id="A1K7B7"/>
<dbReference type="STRING" id="62928.azo2105"/>
<dbReference type="KEGG" id="azo:azo2105"/>
<dbReference type="eggNOG" id="COG0130">
    <property type="taxonomic scope" value="Bacteria"/>
</dbReference>
<dbReference type="HOGENOM" id="CLU_032087_0_3_4"/>
<dbReference type="Proteomes" id="UP000002588">
    <property type="component" value="Chromosome"/>
</dbReference>
<dbReference type="GO" id="GO:0003723">
    <property type="term" value="F:RNA binding"/>
    <property type="evidence" value="ECO:0007669"/>
    <property type="project" value="InterPro"/>
</dbReference>
<dbReference type="GO" id="GO:0160148">
    <property type="term" value="F:tRNA pseudouridine(55) synthase activity"/>
    <property type="evidence" value="ECO:0007669"/>
    <property type="project" value="UniProtKB-EC"/>
</dbReference>
<dbReference type="GO" id="GO:1990481">
    <property type="term" value="P:mRNA pseudouridine synthesis"/>
    <property type="evidence" value="ECO:0007669"/>
    <property type="project" value="TreeGrafter"/>
</dbReference>
<dbReference type="GO" id="GO:0031119">
    <property type="term" value="P:tRNA pseudouridine synthesis"/>
    <property type="evidence" value="ECO:0007669"/>
    <property type="project" value="UniProtKB-UniRule"/>
</dbReference>
<dbReference type="CDD" id="cd02573">
    <property type="entry name" value="PseudoU_synth_EcTruB"/>
    <property type="match status" value="1"/>
</dbReference>
<dbReference type="CDD" id="cd21152">
    <property type="entry name" value="PUA_TruB_bacterial"/>
    <property type="match status" value="1"/>
</dbReference>
<dbReference type="FunFam" id="3.30.2350.10:FF:000011">
    <property type="entry name" value="tRNA pseudouridine synthase B"/>
    <property type="match status" value="1"/>
</dbReference>
<dbReference type="Gene3D" id="3.30.2350.10">
    <property type="entry name" value="Pseudouridine synthase"/>
    <property type="match status" value="1"/>
</dbReference>
<dbReference type="Gene3D" id="2.30.130.10">
    <property type="entry name" value="PUA domain"/>
    <property type="match status" value="1"/>
</dbReference>
<dbReference type="HAMAP" id="MF_01080">
    <property type="entry name" value="TruB_bact"/>
    <property type="match status" value="1"/>
</dbReference>
<dbReference type="InterPro" id="IPR020103">
    <property type="entry name" value="PsdUridine_synth_cat_dom_sf"/>
</dbReference>
<dbReference type="InterPro" id="IPR002501">
    <property type="entry name" value="PsdUridine_synth_N"/>
</dbReference>
<dbReference type="InterPro" id="IPR015947">
    <property type="entry name" value="PUA-like_sf"/>
</dbReference>
<dbReference type="InterPro" id="IPR036974">
    <property type="entry name" value="PUA_sf"/>
</dbReference>
<dbReference type="InterPro" id="IPR014780">
    <property type="entry name" value="tRNA_psdUridine_synth_TruB"/>
</dbReference>
<dbReference type="InterPro" id="IPR015240">
    <property type="entry name" value="tRNA_sdUridine_synth_fam1_C"/>
</dbReference>
<dbReference type="InterPro" id="IPR032819">
    <property type="entry name" value="TruB_C"/>
</dbReference>
<dbReference type="NCBIfam" id="TIGR00431">
    <property type="entry name" value="TruB"/>
    <property type="match status" value="1"/>
</dbReference>
<dbReference type="PANTHER" id="PTHR13767:SF2">
    <property type="entry name" value="PSEUDOURIDYLATE SYNTHASE TRUB1"/>
    <property type="match status" value="1"/>
</dbReference>
<dbReference type="PANTHER" id="PTHR13767">
    <property type="entry name" value="TRNA-PSEUDOURIDINE SYNTHASE"/>
    <property type="match status" value="1"/>
</dbReference>
<dbReference type="Pfam" id="PF09157">
    <property type="entry name" value="TruB-C_2"/>
    <property type="match status" value="1"/>
</dbReference>
<dbReference type="Pfam" id="PF16198">
    <property type="entry name" value="TruB_C_2"/>
    <property type="match status" value="1"/>
</dbReference>
<dbReference type="Pfam" id="PF01509">
    <property type="entry name" value="TruB_N"/>
    <property type="match status" value="1"/>
</dbReference>
<dbReference type="SUPFAM" id="SSF55120">
    <property type="entry name" value="Pseudouridine synthase"/>
    <property type="match status" value="1"/>
</dbReference>
<dbReference type="SUPFAM" id="SSF88697">
    <property type="entry name" value="PUA domain-like"/>
    <property type="match status" value="1"/>
</dbReference>
<reference key="1">
    <citation type="journal article" date="2006" name="Nat. Biotechnol.">
        <title>Complete genome of the mutualistic, N2-fixing grass endophyte Azoarcus sp. strain BH72.</title>
        <authorList>
            <person name="Krause A."/>
            <person name="Ramakumar A."/>
            <person name="Bartels D."/>
            <person name="Battistoni F."/>
            <person name="Bekel T."/>
            <person name="Boch J."/>
            <person name="Boehm M."/>
            <person name="Friedrich F."/>
            <person name="Hurek T."/>
            <person name="Krause L."/>
            <person name="Linke B."/>
            <person name="McHardy A.C."/>
            <person name="Sarkar A."/>
            <person name="Schneiker S."/>
            <person name="Syed A.A."/>
            <person name="Thauer R."/>
            <person name="Vorhoelter F.-J."/>
            <person name="Weidner S."/>
            <person name="Puehler A."/>
            <person name="Reinhold-Hurek B."/>
            <person name="Kaiser O."/>
            <person name="Goesmann A."/>
        </authorList>
    </citation>
    <scope>NUCLEOTIDE SEQUENCE [LARGE SCALE GENOMIC DNA]</scope>
    <source>
        <strain>BH72</strain>
    </source>
</reference>
<proteinExistence type="inferred from homology"/>
<gene>
    <name evidence="1" type="primary">truB</name>
    <name type="ordered locus">azo2105</name>
</gene>
<name>TRUB_AZOSB</name>
<protein>
    <recommendedName>
        <fullName evidence="1">tRNA pseudouridine synthase B</fullName>
        <ecNumber evidence="1">5.4.99.25</ecNumber>
    </recommendedName>
    <alternativeName>
        <fullName evidence="1">tRNA pseudouridine(55) synthase</fullName>
        <shortName evidence="1">Psi55 synthase</shortName>
    </alternativeName>
    <alternativeName>
        <fullName evidence="1">tRNA pseudouridylate synthase</fullName>
    </alternativeName>
    <alternativeName>
        <fullName evidence="1">tRNA-uridine isomerase</fullName>
    </alternativeName>
</protein>
<organism>
    <name type="scientific">Azoarcus sp. (strain BH72)</name>
    <dbReference type="NCBI Taxonomy" id="418699"/>
    <lineage>
        <taxon>Bacteria</taxon>
        <taxon>Pseudomonadati</taxon>
        <taxon>Pseudomonadota</taxon>
        <taxon>Betaproteobacteria</taxon>
        <taxon>Rhodocyclales</taxon>
        <taxon>Zoogloeaceae</taxon>
        <taxon>Azoarcus</taxon>
    </lineage>
</organism>
<evidence type="ECO:0000255" key="1">
    <source>
        <dbReference type="HAMAP-Rule" id="MF_01080"/>
    </source>
</evidence>
<comment type="function">
    <text evidence="1">Responsible for synthesis of pseudouridine from uracil-55 in the psi GC loop of transfer RNAs.</text>
</comment>
<comment type="catalytic activity">
    <reaction evidence="1">
        <text>uridine(55) in tRNA = pseudouridine(55) in tRNA</text>
        <dbReference type="Rhea" id="RHEA:42532"/>
        <dbReference type="Rhea" id="RHEA-COMP:10101"/>
        <dbReference type="Rhea" id="RHEA-COMP:10102"/>
        <dbReference type="ChEBI" id="CHEBI:65314"/>
        <dbReference type="ChEBI" id="CHEBI:65315"/>
        <dbReference type="EC" id="5.4.99.25"/>
    </reaction>
</comment>
<comment type="similarity">
    <text evidence="1">Belongs to the pseudouridine synthase TruB family. Type 1 subfamily.</text>
</comment>
<accession>A1K7B7</accession>
<feature type="chain" id="PRO_1000149818" description="tRNA pseudouridine synthase B">
    <location>
        <begin position="1"/>
        <end position="300"/>
    </location>
</feature>
<feature type="active site" description="Nucleophile" evidence="1">
    <location>
        <position position="47"/>
    </location>
</feature>